<feature type="chain" id="PRO_0000438971" description="Acyltransferase easC">
    <location>
        <begin position="1"/>
        <end position="479"/>
    </location>
</feature>
<feature type="active site" description="Proton acceptor" evidence="1">
    <location>
        <position position="161"/>
    </location>
</feature>
<protein>
    <recommendedName>
        <fullName evidence="3">Acyltransferase easC</fullName>
        <ecNumber evidence="5">2.3.1.-</ecNumber>
    </recommendedName>
    <alternativeName>
        <fullName evidence="3">Emericellamide biosynthesis protein B</fullName>
    </alternativeName>
</protein>
<proteinExistence type="inferred from homology"/>
<gene>
    <name evidence="3" type="primary">easC</name>
    <name type="ORF">AN2548</name>
</gene>
<comment type="function">
    <text evidence="2">Acyltransferase; part of the gene cluster that mediates the biosynthesis of emericellamides, secondary metabolites acting as antibiotics (PubMed:18559263). The biosynthesis of emericellamides initiates from the highly reducing polyketide synthase easB which catalyzes the formation of the linear polyketide chain (PubMed:18559263). EasB produces several polyketides that can be further processed by the downstream enzymes (PubMed:18559263). The polyketides are released from easB as linear polyketide carboxylic acids, which are converted to CoA thioesters by the acyl-CoA ligase easD (PubMed:18559263). The substrates are then loaded onto the acyltransferase easC, which shuttles them to the first thiolation (T) domain of the nonribosomal peptide synthetase easA (PubMed:18559263). EasA then performs condensation of the polyketides with one glycine, two alanine, one valine and one leucine residues (PubMed:18559263). A last step of cyclization leads to the production of emericellamides (PubMed:18559263).</text>
</comment>
<comment type="pathway">
    <text evidence="2">Antibiotic biosynthesis.</text>
</comment>
<comment type="subunit">
    <text evidence="1">Monomer.</text>
</comment>
<comment type="disruption phenotype">
    <text evidence="2">Impairs the production of emerecellamide A, C, D, E and F (PubMed:18559263).</text>
</comment>
<comment type="similarity">
    <text evidence="4">Belongs to the plant acyltransferase family.</text>
</comment>
<comment type="sequence caution" evidence="4">
    <conflict type="erroneous gene model prediction">
        <sequence resource="EMBL-CDS" id="EAA64653"/>
    </conflict>
</comment>
<name>EASC_EMENI</name>
<reference key="1">
    <citation type="journal article" date="2005" name="Nature">
        <title>Sequencing of Aspergillus nidulans and comparative analysis with A. fumigatus and A. oryzae.</title>
        <authorList>
            <person name="Galagan J.E."/>
            <person name="Calvo S.E."/>
            <person name="Cuomo C."/>
            <person name="Ma L.-J."/>
            <person name="Wortman J.R."/>
            <person name="Batzoglou S."/>
            <person name="Lee S.-I."/>
            <person name="Bastuerkmen M."/>
            <person name="Spevak C.C."/>
            <person name="Clutterbuck J."/>
            <person name="Kapitonov V."/>
            <person name="Jurka J."/>
            <person name="Scazzocchio C."/>
            <person name="Farman M.L."/>
            <person name="Butler J."/>
            <person name="Purcell S."/>
            <person name="Harris S."/>
            <person name="Braus G.H."/>
            <person name="Draht O."/>
            <person name="Busch S."/>
            <person name="D'Enfert C."/>
            <person name="Bouchier C."/>
            <person name="Goldman G.H."/>
            <person name="Bell-Pedersen D."/>
            <person name="Griffiths-Jones S."/>
            <person name="Doonan J.H."/>
            <person name="Yu J."/>
            <person name="Vienken K."/>
            <person name="Pain A."/>
            <person name="Freitag M."/>
            <person name="Selker E.U."/>
            <person name="Archer D.B."/>
            <person name="Penalva M.A."/>
            <person name="Oakley B.R."/>
            <person name="Momany M."/>
            <person name="Tanaka T."/>
            <person name="Kumagai T."/>
            <person name="Asai K."/>
            <person name="Machida M."/>
            <person name="Nierman W.C."/>
            <person name="Denning D.W."/>
            <person name="Caddick M.X."/>
            <person name="Hynes M."/>
            <person name="Paoletti M."/>
            <person name="Fischer R."/>
            <person name="Miller B.L."/>
            <person name="Dyer P.S."/>
            <person name="Sachs M.S."/>
            <person name="Osmani S.A."/>
            <person name="Birren B.W."/>
        </authorList>
    </citation>
    <scope>NUCLEOTIDE SEQUENCE [LARGE SCALE GENOMIC DNA]</scope>
    <source>
        <strain>FGSC A4 / ATCC 38163 / CBS 112.46 / NRRL 194 / M139</strain>
    </source>
</reference>
<reference key="2">
    <citation type="journal article" date="2009" name="Fungal Genet. Biol.">
        <title>The 2008 update of the Aspergillus nidulans genome annotation: a community effort.</title>
        <authorList>
            <person name="Wortman J.R."/>
            <person name="Gilsenan J.M."/>
            <person name="Joardar V."/>
            <person name="Deegan J."/>
            <person name="Clutterbuck J."/>
            <person name="Andersen M.R."/>
            <person name="Archer D."/>
            <person name="Bencina M."/>
            <person name="Braus G."/>
            <person name="Coutinho P."/>
            <person name="von Dohren H."/>
            <person name="Doonan J."/>
            <person name="Driessen A.J."/>
            <person name="Durek P."/>
            <person name="Espeso E."/>
            <person name="Fekete E."/>
            <person name="Flipphi M."/>
            <person name="Estrada C.G."/>
            <person name="Geysens S."/>
            <person name="Goldman G."/>
            <person name="de Groot P.W."/>
            <person name="Hansen K."/>
            <person name="Harris S.D."/>
            <person name="Heinekamp T."/>
            <person name="Helmstaedt K."/>
            <person name="Henrissat B."/>
            <person name="Hofmann G."/>
            <person name="Homan T."/>
            <person name="Horio T."/>
            <person name="Horiuchi H."/>
            <person name="James S."/>
            <person name="Jones M."/>
            <person name="Karaffa L."/>
            <person name="Karanyi Z."/>
            <person name="Kato M."/>
            <person name="Keller N."/>
            <person name="Kelly D.E."/>
            <person name="Kiel J.A."/>
            <person name="Kim J.M."/>
            <person name="van der Klei I.J."/>
            <person name="Klis F.M."/>
            <person name="Kovalchuk A."/>
            <person name="Krasevec N."/>
            <person name="Kubicek C.P."/>
            <person name="Liu B."/>
            <person name="Maccabe A."/>
            <person name="Meyer V."/>
            <person name="Mirabito P."/>
            <person name="Miskei M."/>
            <person name="Mos M."/>
            <person name="Mullins J."/>
            <person name="Nelson D.R."/>
            <person name="Nielsen J."/>
            <person name="Oakley B.R."/>
            <person name="Osmani S.A."/>
            <person name="Pakula T."/>
            <person name="Paszewski A."/>
            <person name="Paulsen I."/>
            <person name="Pilsyk S."/>
            <person name="Pocsi I."/>
            <person name="Punt P.J."/>
            <person name="Ram A.F."/>
            <person name="Ren Q."/>
            <person name="Robellet X."/>
            <person name="Robson G."/>
            <person name="Seiboth B."/>
            <person name="van Solingen P."/>
            <person name="Specht T."/>
            <person name="Sun J."/>
            <person name="Taheri-Talesh N."/>
            <person name="Takeshita N."/>
            <person name="Ussery D."/>
            <person name="vanKuyk P.A."/>
            <person name="Visser H."/>
            <person name="van de Vondervoort P.J."/>
            <person name="de Vries R.P."/>
            <person name="Walton J."/>
            <person name="Xiang X."/>
            <person name="Xiong Y."/>
            <person name="Zeng A.P."/>
            <person name="Brandt B.W."/>
            <person name="Cornell M.J."/>
            <person name="van den Hondel C.A."/>
            <person name="Visser J."/>
            <person name="Oliver S.G."/>
            <person name="Turner G."/>
        </authorList>
    </citation>
    <scope>GENOME REANNOTATION</scope>
    <source>
        <strain>FGSC A4 / ATCC 38163 / CBS 112.46 / NRRL 194 / M139</strain>
    </source>
</reference>
<reference key="3">
    <citation type="journal article" date="2008" name="Chem. Biol.">
        <title>Molecular genetic mining of the Aspergillus secondary metabolome: discovery of the emericellamide biosynthetic pathway.</title>
        <authorList>
            <person name="Chiang Y.M."/>
            <person name="Szewczyk E."/>
            <person name="Nayak T."/>
            <person name="Davidson A.D."/>
            <person name="Sanchez J.F."/>
            <person name="Lo H.C."/>
            <person name="Ho W.Y."/>
            <person name="Simityan H."/>
            <person name="Kuo E."/>
            <person name="Praseuth A."/>
            <person name="Watanabe K."/>
            <person name="Oakley B.R."/>
            <person name="Wang C.C."/>
        </authorList>
    </citation>
    <scope>FUNCTION</scope>
    <scope>DISRUPTION PHENOTYPE</scope>
</reference>
<sequence length="479" mass="52982">MEETNVKLSVPLSEDVIKLSALDQQIMRFYAKAVFIFERDSSKTSIDIVHHLKQGLAVTLSEIPDLAATIAPVPNSHRKDLELRIGPNSGVPFKVVDQTKQESWVYGTYPDLAAKHFPTSDIPHDILFIPQPQPSADGLPAAFLQVNIIDGGVIIAISWHHSVCDARGISILIDAWARHTATSLANGKPDLPATPAEGSRDRWRLDHGLREVTIDQLPEYTIDSSAREDPSGSYLLDRENPVTVPYSVSTWYFSASSLKALRDALAQVENDESTQFTKVEAVSALVWKHMSIARQLDRSNPDGSSLFTTRLDFRARTKPPFPDTFIGNINEPTARVRLPIAEICRASTPESLTTLAEAVRAATENTTEQSMRTLIGLVNDAPAVTDVAWKYNYFPGPDLGVTDISNIDAMKKNWGAGLGTPTCVRSYSRETGLLYLFPQDDDGGFEIQVQCEVEAVERLKADETFTRYCEFKRASAYNA</sequence>
<dbReference type="EC" id="2.3.1.-" evidence="5"/>
<dbReference type="EMBL" id="AACD01000043">
    <property type="protein sequence ID" value="EAA64653.1"/>
    <property type="status" value="ALT_SEQ"/>
    <property type="molecule type" value="Genomic_DNA"/>
</dbReference>
<dbReference type="EMBL" id="BN001307">
    <property type="protein sequence ID" value="CBF87074.1"/>
    <property type="molecule type" value="Genomic_DNA"/>
</dbReference>
<dbReference type="RefSeq" id="XP_660152.1">
    <property type="nucleotide sequence ID" value="XM_655060.1"/>
</dbReference>
<dbReference type="SMR" id="C8VPT2"/>
<dbReference type="STRING" id="227321.C8VPT2"/>
<dbReference type="EnsemblFungi" id="CBF87074">
    <property type="protein sequence ID" value="CBF87074"/>
    <property type="gene ID" value="ANIA_02548"/>
</dbReference>
<dbReference type="KEGG" id="ani:ANIA_02548"/>
<dbReference type="VEuPathDB" id="FungiDB:AN2548"/>
<dbReference type="eggNOG" id="ENOG502SIRH">
    <property type="taxonomic scope" value="Eukaryota"/>
</dbReference>
<dbReference type="HOGENOM" id="CLU_026450_1_0_1"/>
<dbReference type="InParanoid" id="C8VPT2"/>
<dbReference type="OMA" id="WGKPESV"/>
<dbReference type="OrthoDB" id="1862401at2759"/>
<dbReference type="Proteomes" id="UP000000560">
    <property type="component" value="Chromosome VII"/>
</dbReference>
<dbReference type="GO" id="GO:0016746">
    <property type="term" value="F:acyltransferase activity"/>
    <property type="evidence" value="ECO:0000304"/>
    <property type="project" value="AspGD"/>
</dbReference>
<dbReference type="GO" id="GO:0016747">
    <property type="term" value="F:acyltransferase activity, transferring groups other than amino-acyl groups"/>
    <property type="evidence" value="ECO:0000318"/>
    <property type="project" value="GO_Central"/>
</dbReference>
<dbReference type="GO" id="GO:1900617">
    <property type="term" value="P:emericellamide A biosynthetic process"/>
    <property type="evidence" value="ECO:0000315"/>
    <property type="project" value="AspGD"/>
</dbReference>
<dbReference type="GO" id="GO:1900557">
    <property type="term" value="P:emericellamide biosynthetic process"/>
    <property type="evidence" value="ECO:0000315"/>
    <property type="project" value="AspGD"/>
</dbReference>
<dbReference type="GO" id="GO:0035837">
    <property type="term" value="P:ergot alkaloid biosynthetic process"/>
    <property type="evidence" value="ECO:0000315"/>
    <property type="project" value="AspGD"/>
</dbReference>
<dbReference type="GO" id="GO:1900809">
    <property type="term" value="P:fumigaclavine C biosynthetic process"/>
    <property type="evidence" value="ECO:0000315"/>
    <property type="project" value="AspGD"/>
</dbReference>
<dbReference type="Gene3D" id="3.30.559.10">
    <property type="entry name" value="Chloramphenicol acetyltransferase-like domain"/>
    <property type="match status" value="2"/>
</dbReference>
<dbReference type="InterPro" id="IPR023213">
    <property type="entry name" value="CAT-like_dom_sf"/>
</dbReference>
<dbReference type="PANTHER" id="PTHR31623">
    <property type="entry name" value="F21J9.9"/>
    <property type="match status" value="1"/>
</dbReference>
<dbReference type="PANTHER" id="PTHR31623:SF17">
    <property type="entry name" value="F21J9.9"/>
    <property type="match status" value="1"/>
</dbReference>
<dbReference type="Pfam" id="PF02458">
    <property type="entry name" value="Transferase"/>
    <property type="match status" value="1"/>
</dbReference>
<evidence type="ECO:0000250" key="1">
    <source>
        <dbReference type="UniProtKB" id="Q70PR7"/>
    </source>
</evidence>
<evidence type="ECO:0000269" key="2">
    <source>
    </source>
</evidence>
<evidence type="ECO:0000303" key="3">
    <source>
    </source>
</evidence>
<evidence type="ECO:0000305" key="4"/>
<evidence type="ECO:0000305" key="5">
    <source>
    </source>
</evidence>
<keyword id="KW-0012">Acyltransferase</keyword>
<keyword id="KW-0017">Alkaloid metabolism</keyword>
<keyword id="KW-1185">Reference proteome</keyword>
<keyword id="KW-0808">Transferase</keyword>
<organism>
    <name type="scientific">Emericella nidulans (strain FGSC A4 / ATCC 38163 / CBS 112.46 / NRRL 194 / M139)</name>
    <name type="common">Aspergillus nidulans</name>
    <dbReference type="NCBI Taxonomy" id="227321"/>
    <lineage>
        <taxon>Eukaryota</taxon>
        <taxon>Fungi</taxon>
        <taxon>Dikarya</taxon>
        <taxon>Ascomycota</taxon>
        <taxon>Pezizomycotina</taxon>
        <taxon>Eurotiomycetes</taxon>
        <taxon>Eurotiomycetidae</taxon>
        <taxon>Eurotiales</taxon>
        <taxon>Aspergillaceae</taxon>
        <taxon>Aspergillus</taxon>
        <taxon>Aspergillus subgen. Nidulantes</taxon>
    </lineage>
</organism>
<accession>C8VPT2</accession>
<accession>Q5BA82</accession>